<name>PP335_ARATH</name>
<sequence>MALKAKKSLSAIFRFAMRNAAKTAEVEAKAVAGDSLISDTGPVSMSLIPDFLSSLKSPEDSSNIGQDFGEPALAGQVSSALDVKSIGYNLLRERNGEKVFPKNVLETLDLLSRKGCSSQKPKQASRGRMLTENYQNKQSEIMEKLAKGCVRKLGTETMFEVLTKMGKEAGEKEYNAMTKLCIQRARRSNDAEYALDQIGKAIEHLKEMRQLGFSIGEGAYGPFFKYLVDMEMVAEFQILKDFIKEACPESCGRLVYYEMLLWIQVNDEEKIHKLCNKVDDSGLSLSILQEYYLVALCEKDSKENFQKLLEIVDITTVSSPDALKSIFGYLGKSLLESVAMKLLWELRDCRKDGVETVSNLIFSYATCIPNSTVEDAIFKFNKLHEELDIVPSSTSYENLVSYLCGSNEVVTALDIVENMCEAGLVISANILHSLLQAIEQILEFNLVQRIYSIMSNKSVKPNSETFRKSINLCIRIKDFEGAYNMLGNLKNFNLAPNSSMYNSIMAGYFREKKVNSALKVLKEMKEADVKPDSVTFSYLINYCGEEATIAKYYKEMKQAGVEVNKHVYMSLVKAYASCGQFEKAKQVLMDLEVPAKDHNELKSVLISALASNGNITEALSIYEEMKKLRCPVEPKAILSLIENSDSNAELGTLVELTHELRDSKFWIDGFFKIIVFAVRNNRSSSILDLLEQTKNHLSKDDVGVEYWFEEVFKSIAETESSDVKVGLDLVSFMKEELELCPSRKCLDFLLHACVNAKDKQSALLVWEEYQCAELPYNVINYLRMYQVLVAAGDSKSAEAIVSKIPNDDKDVKCIIKESRIVFTPKLKKKKKKSKQKGLSLQAK</sequence>
<proteinExistence type="inferred from homology"/>
<protein>
    <recommendedName>
        <fullName>Pentatricopeptide repeat-containing protein At4g21880, mitochondrial</fullName>
    </recommendedName>
</protein>
<gene>
    <name type="ordered locus">At4g21880</name>
    <name type="ORF">T8O5.90</name>
</gene>
<keyword id="KW-0496">Mitochondrion</keyword>
<keyword id="KW-1185">Reference proteome</keyword>
<keyword id="KW-0677">Repeat</keyword>
<keyword id="KW-0809">Transit peptide</keyword>
<feature type="transit peptide" description="Mitochondrion" evidence="1">
    <location>
        <begin position="1"/>
        <end status="unknown"/>
    </location>
</feature>
<feature type="chain" id="PRO_0000363452" description="Pentatricopeptide repeat-containing protein At4g21880, mitochondrial">
    <location>
        <begin status="unknown"/>
        <end position="843"/>
    </location>
</feature>
<feature type="repeat" description="PPR 1">
    <location>
        <begin position="392"/>
        <end position="426"/>
    </location>
</feature>
<feature type="repeat" description="PPR 2">
    <location>
        <begin position="427"/>
        <end position="461"/>
    </location>
</feature>
<feature type="repeat" description="PPR 3">
    <location>
        <begin position="462"/>
        <end position="496"/>
    </location>
</feature>
<feature type="repeat" description="PPR 4">
    <location>
        <begin position="497"/>
        <end position="531"/>
    </location>
</feature>
<feature type="repeat" description="PPR 5">
    <location>
        <begin position="532"/>
        <end position="562"/>
    </location>
</feature>
<feature type="repeat" description="PPR 6">
    <location>
        <begin position="564"/>
        <end position="594"/>
    </location>
</feature>
<feature type="repeat" description="PPR 7">
    <location>
        <begin position="598"/>
        <end position="632"/>
    </location>
</feature>
<reference key="1">
    <citation type="journal article" date="1999" name="Nature">
        <title>Sequence and analysis of chromosome 4 of the plant Arabidopsis thaliana.</title>
        <authorList>
            <person name="Mayer K.F.X."/>
            <person name="Schueller C."/>
            <person name="Wambutt R."/>
            <person name="Murphy G."/>
            <person name="Volckaert G."/>
            <person name="Pohl T."/>
            <person name="Duesterhoeft A."/>
            <person name="Stiekema W."/>
            <person name="Entian K.-D."/>
            <person name="Terryn N."/>
            <person name="Harris B."/>
            <person name="Ansorge W."/>
            <person name="Brandt P."/>
            <person name="Grivell L.A."/>
            <person name="Rieger M."/>
            <person name="Weichselgartner M."/>
            <person name="de Simone V."/>
            <person name="Obermaier B."/>
            <person name="Mache R."/>
            <person name="Mueller M."/>
            <person name="Kreis M."/>
            <person name="Delseny M."/>
            <person name="Puigdomenech P."/>
            <person name="Watson M."/>
            <person name="Schmidtheini T."/>
            <person name="Reichert B."/>
            <person name="Portetelle D."/>
            <person name="Perez-Alonso M."/>
            <person name="Boutry M."/>
            <person name="Bancroft I."/>
            <person name="Vos P."/>
            <person name="Hoheisel J."/>
            <person name="Zimmermann W."/>
            <person name="Wedler H."/>
            <person name="Ridley P."/>
            <person name="Langham S.-A."/>
            <person name="McCullagh B."/>
            <person name="Bilham L."/>
            <person name="Robben J."/>
            <person name="van der Schueren J."/>
            <person name="Grymonprez B."/>
            <person name="Chuang Y.-J."/>
            <person name="Vandenbussche F."/>
            <person name="Braeken M."/>
            <person name="Weltjens I."/>
            <person name="Voet M."/>
            <person name="Bastiaens I."/>
            <person name="Aert R."/>
            <person name="Defoor E."/>
            <person name="Weitzenegger T."/>
            <person name="Bothe G."/>
            <person name="Ramsperger U."/>
            <person name="Hilbert H."/>
            <person name="Braun M."/>
            <person name="Holzer E."/>
            <person name="Brandt A."/>
            <person name="Peters S."/>
            <person name="van Staveren M."/>
            <person name="Dirkse W."/>
            <person name="Mooijman P."/>
            <person name="Klein Lankhorst R."/>
            <person name="Rose M."/>
            <person name="Hauf J."/>
            <person name="Koetter P."/>
            <person name="Berneiser S."/>
            <person name="Hempel S."/>
            <person name="Feldpausch M."/>
            <person name="Lamberth S."/>
            <person name="Van den Daele H."/>
            <person name="De Keyser A."/>
            <person name="Buysshaert C."/>
            <person name="Gielen J."/>
            <person name="Villarroel R."/>
            <person name="De Clercq R."/>
            <person name="van Montagu M."/>
            <person name="Rogers J."/>
            <person name="Cronin A."/>
            <person name="Quail M.A."/>
            <person name="Bray-Allen S."/>
            <person name="Clark L."/>
            <person name="Doggett J."/>
            <person name="Hall S."/>
            <person name="Kay M."/>
            <person name="Lennard N."/>
            <person name="McLay K."/>
            <person name="Mayes R."/>
            <person name="Pettett A."/>
            <person name="Rajandream M.A."/>
            <person name="Lyne M."/>
            <person name="Benes V."/>
            <person name="Rechmann S."/>
            <person name="Borkova D."/>
            <person name="Bloecker H."/>
            <person name="Scharfe M."/>
            <person name="Grimm M."/>
            <person name="Loehnert T.-H."/>
            <person name="Dose S."/>
            <person name="de Haan M."/>
            <person name="Maarse A.C."/>
            <person name="Schaefer M."/>
            <person name="Mueller-Auer S."/>
            <person name="Gabel C."/>
            <person name="Fuchs M."/>
            <person name="Fartmann B."/>
            <person name="Granderath K."/>
            <person name="Dauner D."/>
            <person name="Herzl A."/>
            <person name="Neumann S."/>
            <person name="Argiriou A."/>
            <person name="Vitale D."/>
            <person name="Liguori R."/>
            <person name="Piravandi E."/>
            <person name="Massenet O."/>
            <person name="Quigley F."/>
            <person name="Clabauld G."/>
            <person name="Muendlein A."/>
            <person name="Felber R."/>
            <person name="Schnabl S."/>
            <person name="Hiller R."/>
            <person name="Schmidt W."/>
            <person name="Lecharny A."/>
            <person name="Aubourg S."/>
            <person name="Chefdor F."/>
            <person name="Cooke R."/>
            <person name="Berger C."/>
            <person name="Monfort A."/>
            <person name="Casacuberta E."/>
            <person name="Gibbons T."/>
            <person name="Weber N."/>
            <person name="Vandenbol M."/>
            <person name="Bargues M."/>
            <person name="Terol J."/>
            <person name="Torres A."/>
            <person name="Perez-Perez A."/>
            <person name="Purnelle B."/>
            <person name="Bent E."/>
            <person name="Johnson S."/>
            <person name="Tacon D."/>
            <person name="Jesse T."/>
            <person name="Heijnen L."/>
            <person name="Schwarz S."/>
            <person name="Scholler P."/>
            <person name="Heber S."/>
            <person name="Francs P."/>
            <person name="Bielke C."/>
            <person name="Frishman D."/>
            <person name="Haase D."/>
            <person name="Lemcke K."/>
            <person name="Mewes H.-W."/>
            <person name="Stocker S."/>
            <person name="Zaccaria P."/>
            <person name="Bevan M."/>
            <person name="Wilson R.K."/>
            <person name="de la Bastide M."/>
            <person name="Habermann K."/>
            <person name="Parnell L."/>
            <person name="Dedhia N."/>
            <person name="Gnoj L."/>
            <person name="Schutz K."/>
            <person name="Huang E."/>
            <person name="Spiegel L."/>
            <person name="Sekhon M."/>
            <person name="Murray J."/>
            <person name="Sheet P."/>
            <person name="Cordes M."/>
            <person name="Abu-Threideh J."/>
            <person name="Stoneking T."/>
            <person name="Kalicki J."/>
            <person name="Graves T."/>
            <person name="Harmon G."/>
            <person name="Edwards J."/>
            <person name="Latreille P."/>
            <person name="Courtney L."/>
            <person name="Cloud J."/>
            <person name="Abbott A."/>
            <person name="Scott K."/>
            <person name="Johnson D."/>
            <person name="Minx P."/>
            <person name="Bentley D."/>
            <person name="Fulton B."/>
            <person name="Miller N."/>
            <person name="Greco T."/>
            <person name="Kemp K."/>
            <person name="Kramer J."/>
            <person name="Fulton L."/>
            <person name="Mardis E."/>
            <person name="Dante M."/>
            <person name="Pepin K."/>
            <person name="Hillier L.W."/>
            <person name="Nelson J."/>
            <person name="Spieth J."/>
            <person name="Ryan E."/>
            <person name="Andrews S."/>
            <person name="Geisel C."/>
            <person name="Layman D."/>
            <person name="Du H."/>
            <person name="Ali J."/>
            <person name="Berghoff A."/>
            <person name="Jones K."/>
            <person name="Drone K."/>
            <person name="Cotton M."/>
            <person name="Joshu C."/>
            <person name="Antonoiu B."/>
            <person name="Zidanic M."/>
            <person name="Strong C."/>
            <person name="Sun H."/>
            <person name="Lamar B."/>
            <person name="Yordan C."/>
            <person name="Ma P."/>
            <person name="Zhong J."/>
            <person name="Preston R."/>
            <person name="Vil D."/>
            <person name="Shekher M."/>
            <person name="Matero A."/>
            <person name="Shah R."/>
            <person name="Swaby I.K."/>
            <person name="O'Shaughnessy A."/>
            <person name="Rodriguez M."/>
            <person name="Hoffman J."/>
            <person name="Till S."/>
            <person name="Granat S."/>
            <person name="Shohdy N."/>
            <person name="Hasegawa A."/>
            <person name="Hameed A."/>
            <person name="Lodhi M."/>
            <person name="Johnson A."/>
            <person name="Chen E."/>
            <person name="Marra M.A."/>
            <person name="Martienssen R."/>
            <person name="McCombie W.R."/>
        </authorList>
    </citation>
    <scope>NUCLEOTIDE SEQUENCE [LARGE SCALE GENOMIC DNA]</scope>
    <source>
        <strain>cv. Columbia</strain>
    </source>
</reference>
<reference key="2">
    <citation type="journal article" date="2017" name="Plant J.">
        <title>Araport11: a complete reannotation of the Arabidopsis thaliana reference genome.</title>
        <authorList>
            <person name="Cheng C.Y."/>
            <person name="Krishnakumar V."/>
            <person name="Chan A.P."/>
            <person name="Thibaud-Nissen F."/>
            <person name="Schobel S."/>
            <person name="Town C.D."/>
        </authorList>
    </citation>
    <scope>GENOME REANNOTATION</scope>
    <source>
        <strain>cv. Columbia</strain>
    </source>
</reference>
<reference key="3">
    <citation type="journal article" date="2004" name="Plant Cell">
        <title>Genome-wide analysis of Arabidopsis pentatricopeptide repeat proteins reveals their essential role in organelle biogenesis.</title>
        <authorList>
            <person name="Lurin C."/>
            <person name="Andres C."/>
            <person name="Aubourg S."/>
            <person name="Bellaoui M."/>
            <person name="Bitton F."/>
            <person name="Bruyere C."/>
            <person name="Caboche M."/>
            <person name="Debast C."/>
            <person name="Gualberto J."/>
            <person name="Hoffmann B."/>
            <person name="Lecharny A."/>
            <person name="Le Ret M."/>
            <person name="Martin-Magniette M.-L."/>
            <person name="Mireau H."/>
            <person name="Peeters N."/>
            <person name="Renou J.-P."/>
            <person name="Szurek B."/>
            <person name="Taconnat L."/>
            <person name="Small I."/>
        </authorList>
    </citation>
    <scope>GENE FAMILY</scope>
</reference>
<accession>O49711</accession>
<organism>
    <name type="scientific">Arabidopsis thaliana</name>
    <name type="common">Mouse-ear cress</name>
    <dbReference type="NCBI Taxonomy" id="3702"/>
    <lineage>
        <taxon>Eukaryota</taxon>
        <taxon>Viridiplantae</taxon>
        <taxon>Streptophyta</taxon>
        <taxon>Embryophyta</taxon>
        <taxon>Tracheophyta</taxon>
        <taxon>Spermatophyta</taxon>
        <taxon>Magnoliopsida</taxon>
        <taxon>eudicotyledons</taxon>
        <taxon>Gunneridae</taxon>
        <taxon>Pentapetalae</taxon>
        <taxon>rosids</taxon>
        <taxon>malvids</taxon>
        <taxon>Brassicales</taxon>
        <taxon>Brassicaceae</taxon>
        <taxon>Camelineae</taxon>
        <taxon>Arabidopsis</taxon>
    </lineage>
</organism>
<comment type="subcellular location">
    <subcellularLocation>
        <location evidence="2">Mitochondrion</location>
    </subcellularLocation>
</comment>
<comment type="similarity">
    <text evidence="2">Belongs to the PPR family. P subfamily.</text>
</comment>
<comment type="sequence caution" evidence="2">
    <conflict type="erroneous gene model prediction">
        <sequence resource="EMBL-CDS" id="CAA17155"/>
    </conflict>
</comment>
<comment type="sequence caution" evidence="2">
    <conflict type="erroneous gene model prediction">
        <sequence resource="EMBL-CDS" id="CAB79143"/>
    </conflict>
</comment>
<comment type="online information" name="Pentatricopeptide repeat proteins">
    <link uri="https://ppr.plantenergy.uwa.edu.au"/>
</comment>
<evidence type="ECO:0000255" key="1"/>
<evidence type="ECO:0000305" key="2"/>
<dbReference type="EMBL" id="AL021890">
    <property type="protein sequence ID" value="CAA17155.1"/>
    <property type="status" value="ALT_SEQ"/>
    <property type="molecule type" value="Genomic_DNA"/>
</dbReference>
<dbReference type="EMBL" id="AL161556">
    <property type="protein sequence ID" value="CAB79143.1"/>
    <property type="status" value="ALT_SEQ"/>
    <property type="molecule type" value="Genomic_DNA"/>
</dbReference>
<dbReference type="EMBL" id="CP002687">
    <property type="protein sequence ID" value="AEE84518.1"/>
    <property type="molecule type" value="Genomic_DNA"/>
</dbReference>
<dbReference type="PIR" id="T05470">
    <property type="entry name" value="T05470"/>
</dbReference>
<dbReference type="RefSeq" id="NP_193919.6">
    <property type="nucleotide sequence ID" value="NM_118309.7"/>
</dbReference>
<dbReference type="SMR" id="O49711"/>
<dbReference type="FunCoup" id="O49711">
    <property type="interactions" value="704"/>
</dbReference>
<dbReference type="STRING" id="3702.O49711"/>
<dbReference type="PaxDb" id="3702-AT4G21880.1"/>
<dbReference type="ProteomicsDB" id="249235"/>
<dbReference type="EnsemblPlants" id="AT4G21880.1">
    <property type="protein sequence ID" value="AT4G21880.1"/>
    <property type="gene ID" value="AT4G21880"/>
</dbReference>
<dbReference type="GeneID" id="828277"/>
<dbReference type="Gramene" id="AT4G21880.1">
    <property type="protein sequence ID" value="AT4G21880.1"/>
    <property type="gene ID" value="AT4G21880"/>
</dbReference>
<dbReference type="KEGG" id="ath:AT4G21880"/>
<dbReference type="Araport" id="AT4G21880"/>
<dbReference type="TAIR" id="AT4G21880"/>
<dbReference type="eggNOG" id="KOG4197">
    <property type="taxonomic scope" value="Eukaryota"/>
</dbReference>
<dbReference type="HOGENOM" id="CLU_013098_0_0_1"/>
<dbReference type="InParanoid" id="O49711"/>
<dbReference type="PRO" id="PR:O49711"/>
<dbReference type="Proteomes" id="UP000006548">
    <property type="component" value="Chromosome 4"/>
</dbReference>
<dbReference type="ExpressionAtlas" id="O49711">
    <property type="expression patterns" value="baseline and differential"/>
</dbReference>
<dbReference type="GO" id="GO:0005739">
    <property type="term" value="C:mitochondrion"/>
    <property type="evidence" value="ECO:0007669"/>
    <property type="project" value="UniProtKB-SubCell"/>
</dbReference>
<dbReference type="Gene3D" id="1.25.40.10">
    <property type="entry name" value="Tetratricopeptide repeat domain"/>
    <property type="match status" value="3"/>
</dbReference>
<dbReference type="InterPro" id="IPR002885">
    <property type="entry name" value="Pentatricopeptide_rpt"/>
</dbReference>
<dbReference type="InterPro" id="IPR011990">
    <property type="entry name" value="TPR-like_helical_dom_sf"/>
</dbReference>
<dbReference type="NCBIfam" id="TIGR00756">
    <property type="entry name" value="PPR"/>
    <property type="match status" value="2"/>
</dbReference>
<dbReference type="PANTHER" id="PTHR47262">
    <property type="entry name" value="OS02G0132600 PROTEIN"/>
    <property type="match status" value="1"/>
</dbReference>
<dbReference type="PANTHER" id="PTHR47262:SF1">
    <property type="entry name" value="OS02G0132600 PROTEIN"/>
    <property type="match status" value="1"/>
</dbReference>
<dbReference type="Pfam" id="PF01535">
    <property type="entry name" value="PPR"/>
    <property type="match status" value="2"/>
</dbReference>
<dbReference type="Pfam" id="PF13041">
    <property type="entry name" value="PPR_2"/>
    <property type="match status" value="1"/>
</dbReference>
<dbReference type="PROSITE" id="PS51375">
    <property type="entry name" value="PPR"/>
    <property type="match status" value="6"/>
</dbReference>